<reference key="1">
    <citation type="journal article" date="2009" name="J. Bacteriol.">
        <title>Complete and draft genome sequences of six members of the Aquificales.</title>
        <authorList>
            <person name="Reysenbach A.-L."/>
            <person name="Hamamura N."/>
            <person name="Podar M."/>
            <person name="Griffiths E."/>
            <person name="Ferreira S."/>
            <person name="Hochstein R."/>
            <person name="Heidelberg J."/>
            <person name="Johnson J."/>
            <person name="Mead D."/>
            <person name="Pohorille A."/>
            <person name="Sarmiento M."/>
            <person name="Schweighofer K."/>
            <person name="Seshadri R."/>
            <person name="Voytek M.A."/>
        </authorList>
    </citation>
    <scope>NUCLEOTIDE SEQUENCE [LARGE SCALE GENOMIC DNA]</scope>
    <source>
        <strain>Y04AAS1</strain>
    </source>
</reference>
<dbReference type="EMBL" id="CP001130">
    <property type="protein sequence ID" value="ACG56834.1"/>
    <property type="molecule type" value="Genomic_DNA"/>
</dbReference>
<dbReference type="RefSeq" id="WP_012513191.1">
    <property type="nucleotide sequence ID" value="NC_011126.1"/>
</dbReference>
<dbReference type="SMR" id="B4U6R6"/>
<dbReference type="STRING" id="380749.HY04AAS1_0142"/>
<dbReference type="KEGG" id="hya:HY04AAS1_0142"/>
<dbReference type="eggNOG" id="COG0184">
    <property type="taxonomic scope" value="Bacteria"/>
</dbReference>
<dbReference type="HOGENOM" id="CLU_148518_0_0_0"/>
<dbReference type="OrthoDB" id="9799262at2"/>
<dbReference type="GO" id="GO:0022627">
    <property type="term" value="C:cytosolic small ribosomal subunit"/>
    <property type="evidence" value="ECO:0007669"/>
    <property type="project" value="TreeGrafter"/>
</dbReference>
<dbReference type="GO" id="GO:0019843">
    <property type="term" value="F:rRNA binding"/>
    <property type="evidence" value="ECO:0007669"/>
    <property type="project" value="UniProtKB-UniRule"/>
</dbReference>
<dbReference type="GO" id="GO:0003735">
    <property type="term" value="F:structural constituent of ribosome"/>
    <property type="evidence" value="ECO:0007669"/>
    <property type="project" value="InterPro"/>
</dbReference>
<dbReference type="GO" id="GO:0006412">
    <property type="term" value="P:translation"/>
    <property type="evidence" value="ECO:0007669"/>
    <property type="project" value="UniProtKB-UniRule"/>
</dbReference>
<dbReference type="CDD" id="cd00353">
    <property type="entry name" value="Ribosomal_S15p_S13e"/>
    <property type="match status" value="1"/>
</dbReference>
<dbReference type="FunFam" id="1.10.287.10:FF:000002">
    <property type="entry name" value="30S ribosomal protein S15"/>
    <property type="match status" value="1"/>
</dbReference>
<dbReference type="Gene3D" id="6.10.250.3130">
    <property type="match status" value="1"/>
</dbReference>
<dbReference type="Gene3D" id="1.10.287.10">
    <property type="entry name" value="S15/NS1, RNA-binding"/>
    <property type="match status" value="1"/>
</dbReference>
<dbReference type="HAMAP" id="MF_01343_B">
    <property type="entry name" value="Ribosomal_uS15_B"/>
    <property type="match status" value="1"/>
</dbReference>
<dbReference type="InterPro" id="IPR000589">
    <property type="entry name" value="Ribosomal_uS15"/>
</dbReference>
<dbReference type="InterPro" id="IPR005290">
    <property type="entry name" value="Ribosomal_uS15_bac-type"/>
</dbReference>
<dbReference type="InterPro" id="IPR009068">
    <property type="entry name" value="uS15_NS1_RNA-bd_sf"/>
</dbReference>
<dbReference type="NCBIfam" id="TIGR00952">
    <property type="entry name" value="S15_bact"/>
    <property type="match status" value="1"/>
</dbReference>
<dbReference type="PANTHER" id="PTHR23321">
    <property type="entry name" value="RIBOSOMAL PROTEIN S15, BACTERIAL AND ORGANELLAR"/>
    <property type="match status" value="1"/>
</dbReference>
<dbReference type="PANTHER" id="PTHR23321:SF26">
    <property type="entry name" value="SMALL RIBOSOMAL SUBUNIT PROTEIN US15M"/>
    <property type="match status" value="1"/>
</dbReference>
<dbReference type="Pfam" id="PF00312">
    <property type="entry name" value="Ribosomal_S15"/>
    <property type="match status" value="1"/>
</dbReference>
<dbReference type="SMART" id="SM01387">
    <property type="entry name" value="Ribosomal_S15"/>
    <property type="match status" value="1"/>
</dbReference>
<dbReference type="SUPFAM" id="SSF47060">
    <property type="entry name" value="S15/NS1 RNA-binding domain"/>
    <property type="match status" value="1"/>
</dbReference>
<dbReference type="PROSITE" id="PS00362">
    <property type="entry name" value="RIBOSOMAL_S15"/>
    <property type="match status" value="1"/>
</dbReference>
<proteinExistence type="inferred from homology"/>
<organism>
    <name type="scientific">Hydrogenobaculum sp. (strain Y04AAS1)</name>
    <dbReference type="NCBI Taxonomy" id="380749"/>
    <lineage>
        <taxon>Bacteria</taxon>
        <taxon>Pseudomonadati</taxon>
        <taxon>Aquificota</taxon>
        <taxon>Aquificia</taxon>
        <taxon>Aquificales</taxon>
        <taxon>Aquificaceae</taxon>
        <taxon>Hydrogenobaculum</taxon>
    </lineage>
</organism>
<accession>B4U6R6</accession>
<protein>
    <recommendedName>
        <fullName evidence="1">Small ribosomal subunit protein uS15</fullName>
    </recommendedName>
    <alternativeName>
        <fullName evidence="2">30S ribosomal protein S15</fullName>
    </alternativeName>
</protein>
<feature type="chain" id="PRO_1000143128" description="Small ribosomal subunit protein uS15">
    <location>
        <begin position="1"/>
        <end position="91"/>
    </location>
</feature>
<evidence type="ECO:0000255" key="1">
    <source>
        <dbReference type="HAMAP-Rule" id="MF_01343"/>
    </source>
</evidence>
<evidence type="ECO:0000305" key="2"/>
<name>RS15_HYDS0</name>
<sequence>MPILKERKWELIRSFQHHDKDTGSPEVQIAILTERINKLTEHMKQNKKDLHSRRGLIAMVNKRKALLDYLKRKNYQKYLEVSEKLNLRVKN</sequence>
<comment type="function">
    <text evidence="1">One of the primary rRNA binding proteins, it binds directly to 16S rRNA where it helps nucleate assembly of the platform of the 30S subunit by binding and bridging several RNA helices of the 16S rRNA.</text>
</comment>
<comment type="function">
    <text evidence="1">Forms an intersubunit bridge (bridge B4) with the 23S rRNA of the 50S subunit in the ribosome.</text>
</comment>
<comment type="subunit">
    <text evidence="1">Part of the 30S ribosomal subunit. Forms a bridge to the 50S subunit in the 70S ribosome, contacting the 23S rRNA.</text>
</comment>
<comment type="similarity">
    <text evidence="1">Belongs to the universal ribosomal protein uS15 family.</text>
</comment>
<keyword id="KW-0687">Ribonucleoprotein</keyword>
<keyword id="KW-0689">Ribosomal protein</keyword>
<keyword id="KW-0694">RNA-binding</keyword>
<keyword id="KW-0699">rRNA-binding</keyword>
<gene>
    <name evidence="1" type="primary">rpsO</name>
    <name type="ordered locus">HY04AAS1_0142</name>
</gene>